<organism>
    <name type="scientific">Vigna radiata var. radiata</name>
    <name type="common">Mung bean</name>
    <name type="synonym">Phaseolus aureus</name>
    <dbReference type="NCBI Taxonomy" id="3916"/>
    <lineage>
        <taxon>Eukaryota</taxon>
        <taxon>Viridiplantae</taxon>
        <taxon>Streptophyta</taxon>
        <taxon>Embryophyta</taxon>
        <taxon>Tracheophyta</taxon>
        <taxon>Spermatophyta</taxon>
        <taxon>Magnoliopsida</taxon>
        <taxon>eudicotyledons</taxon>
        <taxon>Gunneridae</taxon>
        <taxon>Pentapetalae</taxon>
        <taxon>rosids</taxon>
        <taxon>fabids</taxon>
        <taxon>Fabales</taxon>
        <taxon>Fabaceae</taxon>
        <taxon>Papilionoideae</taxon>
        <taxon>50 kb inversion clade</taxon>
        <taxon>NPAAA clade</taxon>
        <taxon>indigoferoid/millettioid clade</taxon>
        <taxon>Phaseoleae</taxon>
        <taxon>Vigna</taxon>
    </lineage>
</organism>
<accession>P32292</accession>
<proteinExistence type="evidence at transcript level"/>
<dbReference type="EMBL" id="D14411">
    <property type="protein sequence ID" value="BAA03307.1"/>
    <property type="molecule type" value="mRNA"/>
</dbReference>
<dbReference type="PIR" id="T10900">
    <property type="entry name" value="T10900"/>
</dbReference>
<dbReference type="STRING" id="3916.P32292"/>
<dbReference type="Proteomes" id="UP000087766">
    <property type="component" value="Unplaced"/>
</dbReference>
<dbReference type="GO" id="GO:0005739">
    <property type="term" value="C:mitochondrion"/>
    <property type="evidence" value="ECO:0007669"/>
    <property type="project" value="TreeGrafter"/>
</dbReference>
<dbReference type="GO" id="GO:0006950">
    <property type="term" value="P:response to stress"/>
    <property type="evidence" value="ECO:0007669"/>
    <property type="project" value="TreeGrafter"/>
</dbReference>
<dbReference type="InterPro" id="IPR004926">
    <property type="entry name" value="LEA_3a"/>
</dbReference>
<dbReference type="PANTHER" id="PTHR33509">
    <property type="entry name" value="LATE EMBRYOGENIS ABUNDANT PROTEIN 2-RELATED"/>
    <property type="match status" value="1"/>
</dbReference>
<dbReference type="PANTHER" id="PTHR33509:SF5">
    <property type="entry name" value="PROTEIN SENESCENCE-ASSOCIATED GENE 21, MITOCHONDRIAL"/>
    <property type="match status" value="1"/>
</dbReference>
<dbReference type="Pfam" id="PF03242">
    <property type="entry name" value="LEA_3a"/>
    <property type="match status" value="1"/>
</dbReference>
<gene>
    <name type="primary">ARG2</name>
</gene>
<reference key="1">
    <citation type="journal article" date="1992" name="Plant Cell Physiol.">
        <title>Novel mRNA sequences induced by indole-3-acetic acid in sections of elongating hypocotyls of mung bean (Vigna radiata).</title>
        <authorList>
            <person name="Yamamoto K.T."/>
            <person name="Mori H."/>
            <person name="Imaseki H."/>
        </authorList>
    </citation>
    <scope>NUCLEOTIDE SEQUENCE [MRNA]</scope>
    <source>
        <tissue>Hypocotyl</tissue>
    </source>
</reference>
<comment type="developmental stage">
    <text>Found in elongating hypocotyls.</text>
</comment>
<comment type="induction">
    <text>By auxin, heat, ethylene and wounding.</text>
</comment>
<protein>
    <recommendedName>
        <fullName>Indole-3-acetic acid-induced protein ARG2</fullName>
    </recommendedName>
</protein>
<sequence>MARSFTNVKVLSALVADGFSNTTTRHGFAAAAAATQSATRGGASIGGNMVPKSGEEKVRGGEKVSWVPDPVTGYYRPENTNEIDVADMRATVLGKKFNQ</sequence>
<name>ARG2_VIGRR</name>
<evidence type="ECO:0000256" key="1">
    <source>
        <dbReference type="SAM" id="MobiDB-lite"/>
    </source>
</evidence>
<keyword id="KW-1185">Reference proteome</keyword>
<keyword id="KW-0346">Stress response</keyword>
<feature type="chain" id="PRO_0000064670" description="Indole-3-acetic acid-induced protein ARG2">
    <location>
        <begin position="1"/>
        <end position="99"/>
    </location>
</feature>
<feature type="region of interest" description="Disordered" evidence="1">
    <location>
        <begin position="40"/>
        <end position="62"/>
    </location>
</feature>
<feature type="compositionally biased region" description="Basic and acidic residues" evidence="1">
    <location>
        <begin position="53"/>
        <end position="62"/>
    </location>
</feature>